<comment type="similarity">
    <text evidence="1">Belongs to the bacterial ribosomal protein bL27 family.</text>
</comment>
<sequence>MAHKKAGGSSRNGRDSAGRRLGVKKFGGESVIPGNIIIRQRGTKWHPGRNVGIGKDHTIFAKSEGVVEFRNGKNGRSFVSVVVPAEMPAKAAD</sequence>
<reference key="1">
    <citation type="journal article" date="2011" name="Stand. Genomic Sci.">
        <title>Complete genome sequence of Parvibaculum lavamentivorans type strain (DS-1(T)).</title>
        <authorList>
            <person name="Schleheck D."/>
            <person name="Weiss M."/>
            <person name="Pitluck S."/>
            <person name="Bruce D."/>
            <person name="Land M.L."/>
            <person name="Han S."/>
            <person name="Saunders E."/>
            <person name="Tapia R."/>
            <person name="Detter C."/>
            <person name="Brettin T."/>
            <person name="Han J."/>
            <person name="Woyke T."/>
            <person name="Goodwin L."/>
            <person name="Pennacchio L."/>
            <person name="Nolan M."/>
            <person name="Cook A.M."/>
            <person name="Kjelleberg S."/>
            <person name="Thomas T."/>
        </authorList>
    </citation>
    <scope>NUCLEOTIDE SEQUENCE [LARGE SCALE GENOMIC DNA]</scope>
    <source>
        <strain>DS-1 / DSM 13023 / NCIMB 13966</strain>
    </source>
</reference>
<name>RL27_PARL1</name>
<evidence type="ECO:0000255" key="1">
    <source>
        <dbReference type="HAMAP-Rule" id="MF_00539"/>
    </source>
</evidence>
<evidence type="ECO:0000256" key="2">
    <source>
        <dbReference type="SAM" id="MobiDB-lite"/>
    </source>
</evidence>
<evidence type="ECO:0000305" key="3"/>
<protein>
    <recommendedName>
        <fullName evidence="1">Large ribosomal subunit protein bL27</fullName>
    </recommendedName>
    <alternativeName>
        <fullName evidence="3">50S ribosomal protein L27</fullName>
    </alternativeName>
</protein>
<feature type="chain" id="PRO_1000072545" description="Large ribosomal subunit protein bL27">
    <location>
        <begin position="1"/>
        <end position="93"/>
    </location>
</feature>
<feature type="region of interest" description="Disordered" evidence="2">
    <location>
        <begin position="1"/>
        <end position="22"/>
    </location>
</feature>
<organism>
    <name type="scientific">Parvibaculum lavamentivorans (strain DS-1 / DSM 13023 / NCIMB 13966)</name>
    <dbReference type="NCBI Taxonomy" id="402881"/>
    <lineage>
        <taxon>Bacteria</taxon>
        <taxon>Pseudomonadati</taxon>
        <taxon>Pseudomonadota</taxon>
        <taxon>Alphaproteobacteria</taxon>
        <taxon>Hyphomicrobiales</taxon>
        <taxon>Parvibaculaceae</taxon>
        <taxon>Parvibaculum</taxon>
    </lineage>
</organism>
<proteinExistence type="inferred from homology"/>
<keyword id="KW-1185">Reference proteome</keyword>
<keyword id="KW-0687">Ribonucleoprotein</keyword>
<keyword id="KW-0689">Ribosomal protein</keyword>
<accession>A7HT69</accession>
<gene>
    <name evidence="1" type="primary">rpmA</name>
    <name type="ordered locus">Plav_1482</name>
</gene>
<dbReference type="EMBL" id="CP000774">
    <property type="protein sequence ID" value="ABS63102.1"/>
    <property type="molecule type" value="Genomic_DNA"/>
</dbReference>
<dbReference type="RefSeq" id="WP_012110386.1">
    <property type="nucleotide sequence ID" value="NC_009719.1"/>
</dbReference>
<dbReference type="SMR" id="A7HT69"/>
<dbReference type="STRING" id="402881.Plav_1482"/>
<dbReference type="KEGG" id="pla:Plav_1482"/>
<dbReference type="eggNOG" id="COG0211">
    <property type="taxonomic scope" value="Bacteria"/>
</dbReference>
<dbReference type="HOGENOM" id="CLU_095424_4_1_5"/>
<dbReference type="OrthoDB" id="9803474at2"/>
<dbReference type="Proteomes" id="UP000006377">
    <property type="component" value="Chromosome"/>
</dbReference>
<dbReference type="GO" id="GO:0022625">
    <property type="term" value="C:cytosolic large ribosomal subunit"/>
    <property type="evidence" value="ECO:0007669"/>
    <property type="project" value="TreeGrafter"/>
</dbReference>
<dbReference type="GO" id="GO:0003735">
    <property type="term" value="F:structural constituent of ribosome"/>
    <property type="evidence" value="ECO:0007669"/>
    <property type="project" value="InterPro"/>
</dbReference>
<dbReference type="GO" id="GO:0006412">
    <property type="term" value="P:translation"/>
    <property type="evidence" value="ECO:0007669"/>
    <property type="project" value="UniProtKB-UniRule"/>
</dbReference>
<dbReference type="FunFam" id="2.40.50.100:FF:000020">
    <property type="entry name" value="50S ribosomal protein L27"/>
    <property type="match status" value="1"/>
</dbReference>
<dbReference type="Gene3D" id="2.40.50.100">
    <property type="match status" value="1"/>
</dbReference>
<dbReference type="HAMAP" id="MF_00539">
    <property type="entry name" value="Ribosomal_bL27"/>
    <property type="match status" value="1"/>
</dbReference>
<dbReference type="InterPro" id="IPR001684">
    <property type="entry name" value="Ribosomal_bL27"/>
</dbReference>
<dbReference type="InterPro" id="IPR018261">
    <property type="entry name" value="Ribosomal_bL27_CS"/>
</dbReference>
<dbReference type="NCBIfam" id="TIGR00062">
    <property type="entry name" value="L27"/>
    <property type="match status" value="1"/>
</dbReference>
<dbReference type="PANTHER" id="PTHR15893:SF0">
    <property type="entry name" value="LARGE RIBOSOMAL SUBUNIT PROTEIN BL27M"/>
    <property type="match status" value="1"/>
</dbReference>
<dbReference type="PANTHER" id="PTHR15893">
    <property type="entry name" value="RIBOSOMAL PROTEIN L27"/>
    <property type="match status" value="1"/>
</dbReference>
<dbReference type="Pfam" id="PF01016">
    <property type="entry name" value="Ribosomal_L27"/>
    <property type="match status" value="1"/>
</dbReference>
<dbReference type="PRINTS" id="PR00063">
    <property type="entry name" value="RIBOSOMALL27"/>
</dbReference>
<dbReference type="SUPFAM" id="SSF110324">
    <property type="entry name" value="Ribosomal L27 protein-like"/>
    <property type="match status" value="1"/>
</dbReference>
<dbReference type="PROSITE" id="PS00831">
    <property type="entry name" value="RIBOSOMAL_L27"/>
    <property type="match status" value="1"/>
</dbReference>